<comment type="function">
    <text>Does not bind DNA by itself; probably associates with a p50-NF-kappa-B homolog to act as an activator. Could be involved in hematopoiesis and spleen development. May play a role in the regulation of the circadian clock.</text>
</comment>
<comment type="subcellular location">
    <subcellularLocation>
        <location>Nucleus</location>
    </subcellularLocation>
</comment>
<accession>P51510</accession>
<proteinExistence type="evidence at transcript level"/>
<protein>
    <recommendedName>
        <fullName>Transcription factor RelB homolog</fullName>
    </recommendedName>
</protein>
<dbReference type="EMBL" id="D63332">
    <property type="protein sequence ID" value="BAA09646.1"/>
    <property type="molecule type" value="mRNA"/>
</dbReference>
<dbReference type="PIR" id="S60161">
    <property type="entry name" value="S60161"/>
</dbReference>
<dbReference type="RefSeq" id="NP_001079335.1">
    <property type="nucleotide sequence ID" value="NM_001085866.1"/>
</dbReference>
<dbReference type="SMR" id="P51510"/>
<dbReference type="GeneID" id="378663"/>
<dbReference type="KEGG" id="xla:378663"/>
<dbReference type="AGR" id="Xenbase:XB-GENE-6068550"/>
<dbReference type="CTD" id="378663"/>
<dbReference type="Xenbase" id="XB-GENE-6068550">
    <property type="gene designation" value="relb.S"/>
</dbReference>
<dbReference type="OrthoDB" id="7881762at2759"/>
<dbReference type="Proteomes" id="UP000186698">
    <property type="component" value="Chromosome 8S"/>
</dbReference>
<dbReference type="Bgee" id="378663">
    <property type="expression patterns" value="Expressed in spleen and 19 other cell types or tissues"/>
</dbReference>
<dbReference type="GO" id="GO:0005737">
    <property type="term" value="C:cytoplasm"/>
    <property type="evidence" value="ECO:0000318"/>
    <property type="project" value="GO_Central"/>
</dbReference>
<dbReference type="GO" id="GO:0005634">
    <property type="term" value="C:nucleus"/>
    <property type="evidence" value="ECO:0000318"/>
    <property type="project" value="GO_Central"/>
</dbReference>
<dbReference type="GO" id="GO:0000981">
    <property type="term" value="F:DNA-binding transcription factor activity, RNA polymerase II-specific"/>
    <property type="evidence" value="ECO:0000318"/>
    <property type="project" value="GO_Central"/>
</dbReference>
<dbReference type="GO" id="GO:0000978">
    <property type="term" value="F:RNA polymerase II cis-regulatory region sequence-specific DNA binding"/>
    <property type="evidence" value="ECO:0000318"/>
    <property type="project" value="GO_Central"/>
</dbReference>
<dbReference type="GO" id="GO:0007249">
    <property type="term" value="P:canonical NF-kappaB signal transduction"/>
    <property type="evidence" value="ECO:0000318"/>
    <property type="project" value="GO_Central"/>
</dbReference>
<dbReference type="GO" id="GO:0033554">
    <property type="term" value="P:cellular response to stress"/>
    <property type="evidence" value="ECO:0007669"/>
    <property type="project" value="TreeGrafter"/>
</dbReference>
<dbReference type="GO" id="GO:0006954">
    <property type="term" value="P:inflammatory response"/>
    <property type="evidence" value="ECO:0000318"/>
    <property type="project" value="GO_Central"/>
</dbReference>
<dbReference type="GO" id="GO:0045087">
    <property type="term" value="P:innate immune response"/>
    <property type="evidence" value="ECO:0000318"/>
    <property type="project" value="GO_Central"/>
</dbReference>
<dbReference type="GO" id="GO:0038061">
    <property type="term" value="P:non-canonical NF-kappaB signal transduction"/>
    <property type="evidence" value="ECO:0000318"/>
    <property type="project" value="GO_Central"/>
</dbReference>
<dbReference type="GO" id="GO:0045944">
    <property type="term" value="P:positive regulation of transcription by RNA polymerase II"/>
    <property type="evidence" value="ECO:0000318"/>
    <property type="project" value="GO_Central"/>
</dbReference>
<dbReference type="GO" id="GO:0034097">
    <property type="term" value="P:response to cytokine"/>
    <property type="evidence" value="ECO:0000318"/>
    <property type="project" value="GO_Central"/>
</dbReference>
<dbReference type="GO" id="GO:0048511">
    <property type="term" value="P:rhythmic process"/>
    <property type="evidence" value="ECO:0007669"/>
    <property type="project" value="UniProtKB-KW"/>
</dbReference>
<dbReference type="CDD" id="cd01177">
    <property type="entry name" value="IPT_NFkappaB"/>
    <property type="match status" value="1"/>
</dbReference>
<dbReference type="CDD" id="cd07886">
    <property type="entry name" value="RHD-n_RelB"/>
    <property type="match status" value="1"/>
</dbReference>
<dbReference type="FunFam" id="2.60.40.10:FF:000046">
    <property type="entry name" value="Nuclear factor NF-kappa-B p105 subunit"/>
    <property type="match status" value="1"/>
</dbReference>
<dbReference type="FunFam" id="2.60.40.340:FF:000005">
    <property type="entry name" value="RELB proto-oncogene, NF-kB subunit"/>
    <property type="match status" value="1"/>
</dbReference>
<dbReference type="Gene3D" id="2.60.40.10">
    <property type="entry name" value="Immunoglobulins"/>
    <property type="match status" value="1"/>
</dbReference>
<dbReference type="Gene3D" id="2.60.40.340">
    <property type="entry name" value="Rel homology domain (RHD), DNA-binding domain"/>
    <property type="match status" value="1"/>
</dbReference>
<dbReference type="InterPro" id="IPR013783">
    <property type="entry name" value="Ig-like_fold"/>
</dbReference>
<dbReference type="InterPro" id="IPR014756">
    <property type="entry name" value="Ig_E-set"/>
</dbReference>
<dbReference type="InterPro" id="IPR002909">
    <property type="entry name" value="IPT_dom"/>
</dbReference>
<dbReference type="InterPro" id="IPR033926">
    <property type="entry name" value="IPT_NFkappaB"/>
</dbReference>
<dbReference type="InterPro" id="IPR000451">
    <property type="entry name" value="NFkB/Dor"/>
</dbReference>
<dbReference type="InterPro" id="IPR008967">
    <property type="entry name" value="p53-like_TF_DNA-bd_sf"/>
</dbReference>
<dbReference type="InterPro" id="IPR030496">
    <property type="entry name" value="RelB_RHD_N"/>
</dbReference>
<dbReference type="InterPro" id="IPR030492">
    <property type="entry name" value="RHD_CS"/>
</dbReference>
<dbReference type="InterPro" id="IPR032397">
    <property type="entry name" value="RHD_dimer"/>
</dbReference>
<dbReference type="InterPro" id="IPR011539">
    <property type="entry name" value="RHD_DNA_bind_dom"/>
</dbReference>
<dbReference type="InterPro" id="IPR037059">
    <property type="entry name" value="RHD_DNA_bind_dom_sf"/>
</dbReference>
<dbReference type="PANTHER" id="PTHR24169">
    <property type="entry name" value="NUCLEAR FACTOR NF-KAPPA-B PROTEIN"/>
    <property type="match status" value="1"/>
</dbReference>
<dbReference type="PANTHER" id="PTHR24169:SF18">
    <property type="entry name" value="TRANSCRIPTION FACTOR RELB"/>
    <property type="match status" value="1"/>
</dbReference>
<dbReference type="Pfam" id="PF16179">
    <property type="entry name" value="RHD_dimer"/>
    <property type="match status" value="1"/>
</dbReference>
<dbReference type="Pfam" id="PF00554">
    <property type="entry name" value="RHD_DNA_bind"/>
    <property type="match status" value="1"/>
</dbReference>
<dbReference type="PRINTS" id="PR00057">
    <property type="entry name" value="NFKBTNSCPFCT"/>
</dbReference>
<dbReference type="SMART" id="SM00429">
    <property type="entry name" value="IPT"/>
    <property type="match status" value="1"/>
</dbReference>
<dbReference type="SUPFAM" id="SSF81296">
    <property type="entry name" value="E set domains"/>
    <property type="match status" value="1"/>
</dbReference>
<dbReference type="SUPFAM" id="SSF49417">
    <property type="entry name" value="p53-like transcription factors"/>
    <property type="match status" value="1"/>
</dbReference>
<dbReference type="PROSITE" id="PS01204">
    <property type="entry name" value="REL_1"/>
    <property type="match status" value="1"/>
</dbReference>
<dbReference type="PROSITE" id="PS50254">
    <property type="entry name" value="REL_2"/>
    <property type="match status" value="1"/>
</dbReference>
<organism>
    <name type="scientific">Xenopus laevis</name>
    <name type="common">African clawed frog</name>
    <dbReference type="NCBI Taxonomy" id="8355"/>
    <lineage>
        <taxon>Eukaryota</taxon>
        <taxon>Metazoa</taxon>
        <taxon>Chordata</taxon>
        <taxon>Craniata</taxon>
        <taxon>Vertebrata</taxon>
        <taxon>Euteleostomi</taxon>
        <taxon>Amphibia</taxon>
        <taxon>Batrachia</taxon>
        <taxon>Anura</taxon>
        <taxon>Pipoidea</taxon>
        <taxon>Pipidae</taxon>
        <taxon>Xenopodinae</taxon>
        <taxon>Xenopus</taxon>
        <taxon>Xenopus</taxon>
    </lineage>
</organism>
<name>RELB_XENLA</name>
<keyword id="KW-0010">Activator</keyword>
<keyword id="KW-0090">Biological rhythms</keyword>
<keyword id="KW-0539">Nucleus</keyword>
<keyword id="KW-1185">Reference proteome</keyword>
<keyword id="KW-0804">Transcription</keyword>
<keyword id="KW-0805">Transcription regulation</keyword>
<gene>
    <name type="primary">relb</name>
</gene>
<evidence type="ECO:0000255" key="1"/>
<evidence type="ECO:0000255" key="2">
    <source>
        <dbReference type="PROSITE-ProRule" id="PRU00265"/>
    </source>
</evidence>
<evidence type="ECO:0000256" key="3">
    <source>
        <dbReference type="SAM" id="MobiDB-lite"/>
    </source>
</evidence>
<reference key="1">
    <citation type="journal article" date="1995" name="Nucleic Acids Res.">
        <title>Molecular cloning of cDNA encoding the Xenopus homolog of mammalian RelB.</title>
        <authorList>
            <person name="Suzuki K."/>
            <person name="Yamamoto T."/>
            <person name="Inoue J."/>
        </authorList>
    </citation>
    <scope>NUCLEOTIDE SEQUENCE [MRNA]</scope>
    <source>
        <tissue>Ovary</tissue>
    </source>
</reference>
<feature type="chain" id="PRO_0000205176" description="Transcription factor RelB homolog">
    <location>
        <begin position="1"/>
        <end position="497"/>
    </location>
</feature>
<feature type="domain" description="RHD" evidence="2">
    <location>
        <begin position="78"/>
        <end position="393"/>
    </location>
</feature>
<feature type="region of interest" description="Disordered" evidence="3">
    <location>
        <begin position="359"/>
        <end position="383"/>
    </location>
</feature>
<feature type="short sequence motif" description="Nuclear localization signal" evidence="1">
    <location>
        <begin position="386"/>
        <end position="391"/>
    </location>
</feature>
<sequence>MREQGREGSSFLSQQLGPTIEDVMDLINSDRDVISSPSVFVCEDAPSSILSTVTVAHYVPHEQCPSTSWAPQREGPNPELNITEQPKQRGMRFRYQCEGRSTGSILGEKSTEHNKTLPEIEIINCDGLEEIHVIVCLVWRDPPHRVHPHGLVGKDCHNGICEVTLNPQNGVAKHSFSNLGIQCVRKREIDSAVNERLKLNIDPYKAGKWRLHEEVDLNVVRLCFQASCTGPGFKYDIPPVLSDPIYDKKSTNTSELKISRMNKEYGRCEGGEEVYILCDKVQKEDILVIFGEDKWEARADFSQADVHRQIAIVLKTPPYHDLHITEPACVRVFLQRITDGIRSEGMPFVYMPRVKDPNGVHSKRKHRDCSQLGDIGDPDPHGIEMKRRKVRPSYADHLIPPYPDINLPLMDSFNHNEGYHDLPLMNPDEDAFHFLTEDPHFSDLLTHDPYFLDGYSNQFLPDQVNGVTAHLVGSSLALTDEEQPLPDCAFNDSGCRR</sequence>